<feature type="transit peptide" description="Mitochondrion" evidence="2">
    <location>
        <begin position="1"/>
        <end position="75"/>
    </location>
</feature>
<feature type="chain" id="PRO_0000422386" description="Lipoamide acyltransferase component of branched-chain alpha-keto acid dehydrogenase complex, mitochondrial">
    <location>
        <begin position="76"/>
        <end position="483"/>
    </location>
</feature>
<feature type="domain" description="Lipoyl-binding" evidence="3">
    <location>
        <begin position="76"/>
        <end position="150"/>
    </location>
</feature>
<feature type="domain" description="Peripheral subunit-binding (PSBD)" evidence="4">
    <location>
        <begin position="183"/>
        <end position="220"/>
    </location>
</feature>
<feature type="active site" evidence="2">
    <location>
        <position position="453"/>
    </location>
</feature>
<feature type="active site" evidence="2">
    <location>
        <position position="457"/>
    </location>
</feature>
<feature type="modified residue" description="N6-lipoyllysine" evidence="1 3">
    <location>
        <position position="116"/>
    </location>
</feature>
<feature type="sequence conflict" description="In Ref. 2; AAF35280." evidence="13" ref="2">
    <original>A</original>
    <variation>R</variation>
    <location>
        <position position="68"/>
    </location>
</feature>
<feature type="sequence conflict" description="In Ref. 1; AAC16694." evidence="13" ref="1">
    <original>P</original>
    <variation>L</variation>
    <location>
        <position position="412"/>
    </location>
</feature>
<comment type="function">
    <text evidence="1 7 9">The branched-chain alpha-keto dehydrogenase complex catalyzes the overall conversion of alpha-keto acids to acyl-CoA and CO(2). It contains multiple copies of three enzymatic components: branched-chain alpha-keto acid decarboxylase (E1), lipoamide acyltransferase (E2) and lipoamide dehydrogenase (E3). Within this complex, the catalytic function of this enzyme is to accept, and to transfer to coenzyme A, acyl groups that are generated by the branched-chain alpha-keto acid decarboxylase component (By similarity). Required during sugar starvation and acts under the control of a sugar-sensing mechanism involving Ser/Thr kinases and phosphatases.</text>
</comment>
<comment type="catalytic activity">
    <reaction>
        <text>N(6)-[(R)-dihydrolipoyl]-L-lysyl-[protein] + 2-methylpropanoyl-CoA = N(6)-[(R)-S(8)-2-methylpropanoyldihydrolipoyl]-L-lysyl-[protein] + CoA</text>
        <dbReference type="Rhea" id="RHEA:18865"/>
        <dbReference type="Rhea" id="RHEA-COMP:10475"/>
        <dbReference type="Rhea" id="RHEA-COMP:10497"/>
        <dbReference type="ChEBI" id="CHEBI:57287"/>
        <dbReference type="ChEBI" id="CHEBI:57338"/>
        <dbReference type="ChEBI" id="CHEBI:83100"/>
        <dbReference type="ChEBI" id="CHEBI:83142"/>
        <dbReference type="EC" id="2.3.1.168"/>
    </reaction>
</comment>
<comment type="cofactor">
    <cofactor evidence="1">
        <name>(R)-lipoate</name>
        <dbReference type="ChEBI" id="CHEBI:83088"/>
    </cofactor>
    <text evidence="1">Binds 1 lipoyl cofactor covalently.</text>
</comment>
<comment type="subunit">
    <text evidence="6">Forms a 24-polypeptide structural core with octahedral symmetry.</text>
</comment>
<comment type="subcellular location">
    <subcellularLocation>
        <location evidence="10 11">Mitochondrion matrix</location>
    </subcellularLocation>
</comment>
<comment type="tissue specificity">
    <text evidence="5">Expressed in the non-photosynthetic organs such as siliques, flowers and roots.</text>
</comment>
<comment type="developmental stage">
    <text evidence="5">Barely detected in non senescent green leaves, accumulated slightly at the early stage of leaf senescence and strongly expressed at the late stage of leaf senescence.</text>
</comment>
<comment type="induction">
    <text evidence="5 7 8 9 12">By dark treatment (at the protein level). Induced by the calmodulin antagonists trifluoperazine and fluphenazine in darkness. Down-regulated by sucrose in a hexokinase dependent manner (at protein level). Up-regulated by Leucine and its derivative alpha-keto acid (KIC).</text>
</comment>
<comment type="similarity">
    <text evidence="13">Belongs to the 2-oxoacid dehydrogenase family.</text>
</comment>
<accession>Q9M7Z1</accession>
<accession>O64968</accession>
<accession>Q9M724</accession>
<organism>
    <name type="scientific">Arabidopsis thaliana</name>
    <name type="common">Mouse-ear cress</name>
    <dbReference type="NCBI Taxonomy" id="3702"/>
    <lineage>
        <taxon>Eukaryota</taxon>
        <taxon>Viridiplantae</taxon>
        <taxon>Streptophyta</taxon>
        <taxon>Embryophyta</taxon>
        <taxon>Tracheophyta</taxon>
        <taxon>Spermatophyta</taxon>
        <taxon>Magnoliopsida</taxon>
        <taxon>eudicotyledons</taxon>
        <taxon>Gunneridae</taxon>
        <taxon>Pentapetalae</taxon>
        <taxon>rosids</taxon>
        <taxon>malvids</taxon>
        <taxon>Brassicales</taxon>
        <taxon>Brassicaceae</taxon>
        <taxon>Camelineae</taxon>
        <taxon>Arabidopsis</taxon>
    </lineage>
</organism>
<reference key="1">
    <citation type="online journal article" date="1998" name="Plant Gene Register">
        <title>Nucleotide sequence of a cDNA encoding the dihydrolipoylacyltransferase (E2) subunit of the branched-chain alpha-keto-acid dehydrogenase complex from Arabidopsis thaliana.</title>
        <authorList>
            <person name="Mooney B.P."/>
            <person name="Miernyk J.A."/>
            <person name="Randall D.D."/>
        </authorList>
        <locator>PGR98-071</locator>
    </citation>
    <scope>NUCLEOTIDE SEQUENCE [MRNA]</scope>
    <source>
        <strain>cv. Columbia</strain>
    </source>
</reference>
<reference key="2">
    <citation type="journal article" date="2000" name="J. Biol. Chem.">
        <title>Isolation and characterization of cDNA clones for the E1beta and E2 subunits of the branched-chain alpha-ketoacid dehydrogenase complex in Arabidopsis.</title>
        <authorList>
            <person name="Fujiki Y."/>
            <person name="Sato T."/>
            <person name="Ito M."/>
            <person name="Watanabe A."/>
        </authorList>
    </citation>
    <scope>NUCLEOTIDE SEQUENCE [MRNA]</scope>
    <scope>INDUCTION BY DARK AND SUCROSE</scope>
    <scope>TISSUE SPECIFICITY</scope>
    <scope>DEVELOPMENTAL STAGE</scope>
    <source>
        <strain>cv. Columbia</strain>
    </source>
</reference>
<reference key="3">
    <citation type="journal article" date="2000" name="Nature">
        <title>Sequence and analysis of chromosome 3 of the plant Arabidopsis thaliana.</title>
        <authorList>
            <person name="Salanoubat M."/>
            <person name="Lemcke K."/>
            <person name="Rieger M."/>
            <person name="Ansorge W."/>
            <person name="Unseld M."/>
            <person name="Fartmann B."/>
            <person name="Valle G."/>
            <person name="Bloecker H."/>
            <person name="Perez-Alonso M."/>
            <person name="Obermaier B."/>
            <person name="Delseny M."/>
            <person name="Boutry M."/>
            <person name="Grivell L.A."/>
            <person name="Mache R."/>
            <person name="Puigdomenech P."/>
            <person name="De Simone V."/>
            <person name="Choisne N."/>
            <person name="Artiguenave F."/>
            <person name="Robert C."/>
            <person name="Brottier P."/>
            <person name="Wincker P."/>
            <person name="Cattolico L."/>
            <person name="Weissenbach J."/>
            <person name="Saurin W."/>
            <person name="Quetier F."/>
            <person name="Schaefer M."/>
            <person name="Mueller-Auer S."/>
            <person name="Gabel C."/>
            <person name="Fuchs M."/>
            <person name="Benes V."/>
            <person name="Wurmbach E."/>
            <person name="Drzonek H."/>
            <person name="Erfle H."/>
            <person name="Jordan N."/>
            <person name="Bangert S."/>
            <person name="Wiedelmann R."/>
            <person name="Kranz H."/>
            <person name="Voss H."/>
            <person name="Holland R."/>
            <person name="Brandt P."/>
            <person name="Nyakatura G."/>
            <person name="Vezzi A."/>
            <person name="D'Angelo M."/>
            <person name="Pallavicini A."/>
            <person name="Toppo S."/>
            <person name="Simionati B."/>
            <person name="Conrad A."/>
            <person name="Hornischer K."/>
            <person name="Kauer G."/>
            <person name="Loehnert T.-H."/>
            <person name="Nordsiek G."/>
            <person name="Reichelt J."/>
            <person name="Scharfe M."/>
            <person name="Schoen O."/>
            <person name="Bargues M."/>
            <person name="Terol J."/>
            <person name="Climent J."/>
            <person name="Navarro P."/>
            <person name="Collado C."/>
            <person name="Perez-Perez A."/>
            <person name="Ottenwaelder B."/>
            <person name="Duchemin D."/>
            <person name="Cooke R."/>
            <person name="Laudie M."/>
            <person name="Berger-Llauro C."/>
            <person name="Purnelle B."/>
            <person name="Masuy D."/>
            <person name="de Haan M."/>
            <person name="Maarse A.C."/>
            <person name="Alcaraz J.-P."/>
            <person name="Cottet A."/>
            <person name="Casacuberta E."/>
            <person name="Monfort A."/>
            <person name="Argiriou A."/>
            <person name="Flores M."/>
            <person name="Liguori R."/>
            <person name="Vitale D."/>
            <person name="Mannhaupt G."/>
            <person name="Haase D."/>
            <person name="Schoof H."/>
            <person name="Rudd S."/>
            <person name="Zaccaria P."/>
            <person name="Mewes H.-W."/>
            <person name="Mayer K.F.X."/>
            <person name="Kaul S."/>
            <person name="Town C.D."/>
            <person name="Koo H.L."/>
            <person name="Tallon L.J."/>
            <person name="Jenkins J."/>
            <person name="Rooney T."/>
            <person name="Rizzo M."/>
            <person name="Walts A."/>
            <person name="Utterback T."/>
            <person name="Fujii C.Y."/>
            <person name="Shea T.P."/>
            <person name="Creasy T.H."/>
            <person name="Haas B."/>
            <person name="Maiti R."/>
            <person name="Wu D."/>
            <person name="Peterson J."/>
            <person name="Van Aken S."/>
            <person name="Pai G."/>
            <person name="Militscher J."/>
            <person name="Sellers P."/>
            <person name="Gill J.E."/>
            <person name="Feldblyum T.V."/>
            <person name="Preuss D."/>
            <person name="Lin X."/>
            <person name="Nierman W.C."/>
            <person name="Salzberg S.L."/>
            <person name="White O."/>
            <person name="Venter J.C."/>
            <person name="Fraser C.M."/>
            <person name="Kaneko T."/>
            <person name="Nakamura Y."/>
            <person name="Sato S."/>
            <person name="Kato T."/>
            <person name="Asamizu E."/>
            <person name="Sasamoto S."/>
            <person name="Kimura T."/>
            <person name="Idesawa K."/>
            <person name="Kawashima K."/>
            <person name="Kishida Y."/>
            <person name="Kiyokawa C."/>
            <person name="Kohara M."/>
            <person name="Matsumoto M."/>
            <person name="Matsuno A."/>
            <person name="Muraki A."/>
            <person name="Nakayama S."/>
            <person name="Nakazaki N."/>
            <person name="Shinpo S."/>
            <person name="Takeuchi C."/>
            <person name="Wada T."/>
            <person name="Watanabe A."/>
            <person name="Yamada M."/>
            <person name="Yasuda M."/>
            <person name="Tabata S."/>
        </authorList>
    </citation>
    <scope>NUCLEOTIDE SEQUENCE [LARGE SCALE GENOMIC DNA]</scope>
    <source>
        <strain>cv. Columbia</strain>
    </source>
</reference>
<reference key="4">
    <citation type="journal article" date="2017" name="Plant J.">
        <title>Araport11: a complete reannotation of the Arabidopsis thaliana reference genome.</title>
        <authorList>
            <person name="Cheng C.Y."/>
            <person name="Krishnakumar V."/>
            <person name="Chan A.P."/>
            <person name="Thibaud-Nissen F."/>
            <person name="Schobel S."/>
            <person name="Town C.D."/>
        </authorList>
    </citation>
    <scope>GENOME REANNOTATION</scope>
    <source>
        <strain>cv. Columbia</strain>
    </source>
</reference>
<reference key="5">
    <citation type="journal article" date="2009" name="DNA Res.">
        <title>Analysis of multiple occurrences of alternative splicing events in Arabidopsis thaliana using novel sequenced full-length cDNAs.</title>
        <authorList>
            <person name="Iida K."/>
            <person name="Fukami-Kobayashi K."/>
            <person name="Toyoda A."/>
            <person name="Sakaki Y."/>
            <person name="Kobayashi M."/>
            <person name="Seki M."/>
            <person name="Shinozaki K."/>
        </authorList>
    </citation>
    <scope>NUCLEOTIDE SEQUENCE [LARGE SCALE MRNA]</scope>
    <source>
        <strain>cv. Columbia</strain>
        <tissue>Rosette leaf</tissue>
    </source>
</reference>
<reference key="6">
    <citation type="submission" date="2002-03" db="EMBL/GenBank/DDBJ databases">
        <title>Full-length cDNA from Arabidopsis thaliana.</title>
        <authorList>
            <person name="Brover V.V."/>
            <person name="Troukhan M.E."/>
            <person name="Alexandrov N.A."/>
            <person name="Lu Y.-P."/>
            <person name="Flavell R.B."/>
            <person name="Feldmann K.A."/>
        </authorList>
    </citation>
    <scope>NUCLEOTIDE SEQUENCE [LARGE SCALE MRNA]</scope>
</reference>
<reference key="7">
    <citation type="journal article" date="1990" name="J. Biol. Chem.">
        <title>Structure-function relationships in dihydrolipoamide acyltransferases.</title>
        <authorList>
            <person name="Reed L.J."/>
            <person name="Hackert M.L."/>
        </authorList>
    </citation>
    <scope>REVIEW</scope>
</reference>
<reference key="8">
    <citation type="journal article" date="2000" name="Plant Physiol.">
        <title>Multiple signaling pathways in gene expression during sugar starvation. Pharmacological analysis of din gene expression in suspension-cultured cells of Arabidopsis.</title>
        <authorList>
            <person name="Fujiki Y."/>
            <person name="Ito M."/>
            <person name="Nishida I."/>
            <person name="Watanabe A."/>
        </authorList>
    </citation>
    <scope>INDUCTION BY SUGAR</scope>
    <scope>FUNCTION</scope>
</reference>
<reference key="9">
    <citation type="journal article" date="2000" name="Protein Sci.">
        <title>The dihydrolipoyl acyltransferase (BCE2) subunit of the plant branched-chain alpha-ketoacid dehydrogenase complex forms a 24-mer core with octagonal symmetry.</title>
        <authorList>
            <person name="Mooney B.P."/>
            <person name="Henzl M.T."/>
            <person name="Miernyk J.A."/>
            <person name="Randall D.D."/>
        </authorList>
    </citation>
    <scope>SUBUNIT</scope>
</reference>
<reference key="10">
    <citation type="journal article" date="2001" name="FEBS Lett.">
        <title>Leucine and its keto acid enhance the coordinated expression of genes for branched-chain amino acid catabolism in Arabidopsis under sugar starvation.</title>
        <authorList>
            <person name="Fujiki Y."/>
            <person name="Ito M."/>
            <person name="Nishida I."/>
            <person name="Watanabe A."/>
        </authorList>
    </citation>
    <scope>INDUCTION BY DARK AND SUCROSE</scope>
    <scope>INDUCTION BY LEUCINE AND KIC</scope>
</reference>
<reference key="11">
    <citation type="journal article" date="2002" name="Plant Cell Physiol.">
        <title>Activation of the promoters of Arabidopsis genes for the branched-chain alpha-keto acid dehydrogenase complex in transgenic tobacco BY-2 cells under sugar starvation.</title>
        <authorList>
            <person name="Fujiki Y."/>
            <person name="Ito M."/>
            <person name="Itoh T."/>
            <person name="Nishida I."/>
            <person name="Watanabe A."/>
        </authorList>
    </citation>
    <scope>FUNCTION</scope>
    <scope>INDUCTION BY SUGAR</scope>
</reference>
<reference key="12">
    <citation type="journal article" date="2004" name="Plant Cell">
        <title>Experimental analysis of the Arabidopsis mitochondrial proteome highlights signaling and regulatory components, provides assessment of targeting prediction programs, and indicates plant-specific mitochondrial proteins.</title>
        <authorList>
            <person name="Heazlewood J.L."/>
            <person name="Tonti-Filippini J.S."/>
            <person name="Gout A.M."/>
            <person name="Day D.A."/>
            <person name="Whelan J."/>
            <person name="Millar A.H."/>
        </authorList>
    </citation>
    <scope>IDENTIFICATION BY MASS SPECTROMETRY</scope>
    <scope>SUBCELLULAR LOCATION [LARGE SCALE ANALYSIS]</scope>
    <source>
        <strain>cv. Landsberg erecta</strain>
    </source>
</reference>
<reference key="13">
    <citation type="journal article" date="2004" name="Plant Physiol.">
        <title>Lipoic acid-dependent oxidative catabolism of alpha-keto acids in mitochondria provides evidence for branched-chain amino acid catabolism in Arabidopsis.</title>
        <authorList>
            <person name="Taylor N.L."/>
            <person name="Heazlewood J.L."/>
            <person name="Day D.A."/>
            <person name="Millar A.H."/>
        </authorList>
    </citation>
    <scope>IDENTIFICATION BY MASS SPECTROMETRY</scope>
    <scope>SUBCELLULAR LOCATION</scope>
</reference>
<reference key="14">
    <citation type="journal article" date="2005" name="Plant Cell Physiol.">
        <title>Response to darkness of late-responsive dark-inducible genes is positively regulated by leaf age and negatively regulated by calmodulin-antagonist-sensitive signalling in Arabidopsis thaliana.</title>
        <authorList>
            <person name="Fujiki Y."/>
            <person name="Nakagawa Y."/>
            <person name="Furumoto T."/>
            <person name="Yoshida S."/>
            <person name="Biswal B."/>
            <person name="Ito M."/>
            <person name="Watanabe A."/>
            <person name="Nishida I."/>
        </authorList>
    </citation>
    <scope>INDUCTION BY DARK</scope>
</reference>
<keyword id="KW-0012">Acyltransferase</keyword>
<keyword id="KW-0275">Fatty acid biosynthesis</keyword>
<keyword id="KW-0276">Fatty acid metabolism</keyword>
<keyword id="KW-0444">Lipid biosynthesis</keyword>
<keyword id="KW-0443">Lipid metabolism</keyword>
<keyword id="KW-0450">Lipoyl</keyword>
<keyword id="KW-0496">Mitochondrion</keyword>
<keyword id="KW-1185">Reference proteome</keyword>
<keyword id="KW-0808">Transferase</keyword>
<keyword id="KW-0809">Transit peptide</keyword>
<sequence>MIARRIWRSHRFLRPFSSSSVCSPPFRVPEYLSQSSSSPASRPFFVHPPTLMKWGGGSRSWFSNEAMATDSNSGLIDVPLAQTGEGIAECELLKWFVKEGDSVEEFQPLCEVQSDKATIEITSRFKGKVALISHSPGDIIKVGETLVRLAVEDSQDSLLTTDSSEIVTLGGSKQGTENLLGALSTPAVRNLAKDLGIDINVITGTGKDGRVLKEDVLRFSDQKGFVTDSVSSEHAVIGGDSVSTKASSNFEDKTVPLRGFSRAMVKTMTMATSVPHFHFVEEINCDSLVELKQFFKENNTDSTIKHTFLPTLIKSLSMALTKYPFVNSCFNAESLEIILKGSHNIGVAMATEHGLVVPNIKNVQSLSLLEITKELSRLQHLAANNKLNPEDVTGGTITLSNIGAIGGKFGSPLLNLPEVAIIALGRIEKVPKFSKEGTVYPASIMMVNIAADHRVLDGATVARFCCQWKEYVEKPELLMLQMR</sequence>
<dbReference type="EC" id="2.3.1.168"/>
<dbReference type="EMBL" id="AF038505">
    <property type="protein sequence ID" value="AAC16694.1"/>
    <property type="molecule type" value="mRNA"/>
</dbReference>
<dbReference type="EMBL" id="AF145451">
    <property type="protein sequence ID" value="AAF35280.1"/>
    <property type="molecule type" value="mRNA"/>
</dbReference>
<dbReference type="EMBL" id="AC023912">
    <property type="protein sequence ID" value="AAF63813.1"/>
    <property type="molecule type" value="Genomic_DNA"/>
</dbReference>
<dbReference type="EMBL" id="CP002686">
    <property type="protein sequence ID" value="AEE74466.1"/>
    <property type="molecule type" value="Genomic_DNA"/>
</dbReference>
<dbReference type="EMBL" id="CP002686">
    <property type="protein sequence ID" value="AEE74467.1"/>
    <property type="molecule type" value="Genomic_DNA"/>
</dbReference>
<dbReference type="EMBL" id="AK316767">
    <property type="protein sequence ID" value="BAH19487.1"/>
    <property type="molecule type" value="mRNA"/>
</dbReference>
<dbReference type="EMBL" id="AK317408">
    <property type="protein sequence ID" value="BAH20078.1"/>
    <property type="molecule type" value="mRNA"/>
</dbReference>
<dbReference type="EMBL" id="AY086441">
    <property type="protein sequence ID" value="AAM63444.1"/>
    <property type="molecule type" value="mRNA"/>
</dbReference>
<dbReference type="PIR" id="T52136">
    <property type="entry name" value="T52136"/>
</dbReference>
<dbReference type="RefSeq" id="NP_187341.1">
    <property type="nucleotide sequence ID" value="NM_111565.6"/>
</dbReference>
<dbReference type="RefSeq" id="NP_850527.1">
    <property type="nucleotide sequence ID" value="NM_180196.3"/>
</dbReference>
<dbReference type="SMR" id="Q9M7Z1"/>
<dbReference type="BioGRID" id="5204">
    <property type="interactions" value="7"/>
</dbReference>
<dbReference type="FunCoup" id="Q9M7Z1">
    <property type="interactions" value="3368"/>
</dbReference>
<dbReference type="STRING" id="3702.Q9M7Z1"/>
<dbReference type="GlyGen" id="Q9M7Z1">
    <property type="glycosylation" value="1 site"/>
</dbReference>
<dbReference type="PaxDb" id="3702-AT3G06850.1"/>
<dbReference type="ProteomicsDB" id="238906"/>
<dbReference type="EnsemblPlants" id="AT3G06850.1">
    <property type="protein sequence ID" value="AT3G06850.1"/>
    <property type="gene ID" value="AT3G06850"/>
</dbReference>
<dbReference type="EnsemblPlants" id="AT3G06850.2">
    <property type="protein sequence ID" value="AT3G06850.2"/>
    <property type="gene ID" value="AT3G06850"/>
</dbReference>
<dbReference type="GeneID" id="819869"/>
<dbReference type="Gramene" id="AT3G06850.1">
    <property type="protein sequence ID" value="AT3G06850.1"/>
    <property type="gene ID" value="AT3G06850"/>
</dbReference>
<dbReference type="Gramene" id="AT3G06850.2">
    <property type="protein sequence ID" value="AT3G06850.2"/>
    <property type="gene ID" value="AT3G06850"/>
</dbReference>
<dbReference type="KEGG" id="ath:AT3G06850"/>
<dbReference type="Araport" id="AT3G06850"/>
<dbReference type="TAIR" id="AT3G06850">
    <property type="gene designation" value="BCE2"/>
</dbReference>
<dbReference type="eggNOG" id="KOG0558">
    <property type="taxonomic scope" value="Eukaryota"/>
</dbReference>
<dbReference type="HOGENOM" id="CLU_016733_10_0_1"/>
<dbReference type="InParanoid" id="Q9M7Z1"/>
<dbReference type="OMA" id="MPFCIKA"/>
<dbReference type="OrthoDB" id="15567at2759"/>
<dbReference type="PhylomeDB" id="Q9M7Z1"/>
<dbReference type="PRO" id="PR:Q9M7Z1"/>
<dbReference type="Proteomes" id="UP000006548">
    <property type="component" value="Chromosome 3"/>
</dbReference>
<dbReference type="ExpressionAtlas" id="Q9M7Z1">
    <property type="expression patterns" value="baseline and differential"/>
</dbReference>
<dbReference type="GO" id="GO:0005759">
    <property type="term" value="C:mitochondrial matrix"/>
    <property type="evidence" value="ECO:0007669"/>
    <property type="project" value="UniProtKB-SubCell"/>
</dbReference>
<dbReference type="GO" id="GO:0005739">
    <property type="term" value="C:mitochondrion"/>
    <property type="evidence" value="ECO:0000314"/>
    <property type="project" value="TAIR"/>
</dbReference>
<dbReference type="GO" id="GO:0016407">
    <property type="term" value="F:acetyltransferase activity"/>
    <property type="evidence" value="ECO:0000314"/>
    <property type="project" value="TAIR"/>
</dbReference>
<dbReference type="GO" id="GO:0043754">
    <property type="term" value="F:dihydrolipoyllysine-residue (2-methylpropanoyl)transferase activity"/>
    <property type="evidence" value="ECO:0007669"/>
    <property type="project" value="UniProtKB-EC"/>
</dbReference>
<dbReference type="GO" id="GO:0008270">
    <property type="term" value="F:zinc ion binding"/>
    <property type="evidence" value="ECO:0007005"/>
    <property type="project" value="TAIR"/>
</dbReference>
<dbReference type="GO" id="GO:0043617">
    <property type="term" value="P:cellular response to sucrose starvation"/>
    <property type="evidence" value="ECO:0000270"/>
    <property type="project" value="UniProtKB"/>
</dbReference>
<dbReference type="GO" id="GO:0006633">
    <property type="term" value="P:fatty acid biosynthetic process"/>
    <property type="evidence" value="ECO:0007669"/>
    <property type="project" value="UniProtKB-KW"/>
</dbReference>
<dbReference type="GO" id="GO:0009646">
    <property type="term" value="P:response to absence of light"/>
    <property type="evidence" value="ECO:0000270"/>
    <property type="project" value="UniProtKB"/>
</dbReference>
<dbReference type="GO" id="GO:0009744">
    <property type="term" value="P:response to sucrose"/>
    <property type="evidence" value="ECO:0000270"/>
    <property type="project" value="UniProtKB"/>
</dbReference>
<dbReference type="CDD" id="cd06849">
    <property type="entry name" value="lipoyl_domain"/>
    <property type="match status" value="1"/>
</dbReference>
<dbReference type="FunFam" id="2.40.50.100:FF:000013">
    <property type="entry name" value="Dihydrolipoamide acetyltransferase component of pyruvate dehydrogenase complex"/>
    <property type="match status" value="1"/>
</dbReference>
<dbReference type="FunFam" id="3.30.559.10:FF:000007">
    <property type="entry name" value="Dihydrolipoamide acetyltransferase component of pyruvate dehydrogenase complex"/>
    <property type="match status" value="1"/>
</dbReference>
<dbReference type="Gene3D" id="2.40.50.100">
    <property type="match status" value="1"/>
</dbReference>
<dbReference type="Gene3D" id="3.30.559.10">
    <property type="entry name" value="Chloramphenicol acetyltransferase-like domain"/>
    <property type="match status" value="1"/>
</dbReference>
<dbReference type="Gene3D" id="4.10.320.10">
    <property type="entry name" value="E3-binding domain"/>
    <property type="match status" value="1"/>
</dbReference>
<dbReference type="InterPro" id="IPR003016">
    <property type="entry name" value="2-oxoA_DH_lipoyl-BS"/>
</dbReference>
<dbReference type="InterPro" id="IPR001078">
    <property type="entry name" value="2-oxoacid_DH_actylTfrase"/>
</dbReference>
<dbReference type="InterPro" id="IPR050743">
    <property type="entry name" value="2-oxoacid_DH_E2_comp"/>
</dbReference>
<dbReference type="InterPro" id="IPR000089">
    <property type="entry name" value="Biotin_lipoyl"/>
</dbReference>
<dbReference type="InterPro" id="IPR023213">
    <property type="entry name" value="CAT-like_dom_sf"/>
</dbReference>
<dbReference type="InterPro" id="IPR036625">
    <property type="entry name" value="E3-bd_dom_sf"/>
</dbReference>
<dbReference type="InterPro" id="IPR004167">
    <property type="entry name" value="PSBD"/>
</dbReference>
<dbReference type="InterPro" id="IPR011053">
    <property type="entry name" value="Single_hybrid_motif"/>
</dbReference>
<dbReference type="PANTHER" id="PTHR43178">
    <property type="entry name" value="DIHYDROLIPOAMIDE ACETYLTRANSFERASE COMPONENT OF PYRUVATE DEHYDROGENASE COMPLEX"/>
    <property type="match status" value="1"/>
</dbReference>
<dbReference type="PANTHER" id="PTHR43178:SF14">
    <property type="entry name" value="LIPOAMIDE ACYLTRANSFERASE COMPONENT OF BRANCHED-CHAIN ALPHA-KETO ACID DEHYDROGENASE COMPLEX, MITOCHONDRIAL"/>
    <property type="match status" value="1"/>
</dbReference>
<dbReference type="Pfam" id="PF00198">
    <property type="entry name" value="2-oxoacid_dh"/>
    <property type="match status" value="1"/>
</dbReference>
<dbReference type="Pfam" id="PF00364">
    <property type="entry name" value="Biotin_lipoyl"/>
    <property type="match status" value="1"/>
</dbReference>
<dbReference type="Pfam" id="PF02817">
    <property type="entry name" value="E3_binding"/>
    <property type="match status" value="1"/>
</dbReference>
<dbReference type="SUPFAM" id="SSF52777">
    <property type="entry name" value="CoA-dependent acyltransferases"/>
    <property type="match status" value="1"/>
</dbReference>
<dbReference type="SUPFAM" id="SSF47005">
    <property type="entry name" value="Peripheral subunit-binding domain of 2-oxo acid dehydrogenase complex"/>
    <property type="match status" value="1"/>
</dbReference>
<dbReference type="SUPFAM" id="SSF51230">
    <property type="entry name" value="Single hybrid motif"/>
    <property type="match status" value="1"/>
</dbReference>
<dbReference type="PROSITE" id="PS50968">
    <property type="entry name" value="BIOTINYL_LIPOYL"/>
    <property type="match status" value="1"/>
</dbReference>
<dbReference type="PROSITE" id="PS00189">
    <property type="entry name" value="LIPOYL"/>
    <property type="match status" value="1"/>
</dbReference>
<dbReference type="PROSITE" id="PS51826">
    <property type="entry name" value="PSBD"/>
    <property type="match status" value="1"/>
</dbReference>
<proteinExistence type="evidence at protein level"/>
<name>ODB2_ARATH</name>
<gene>
    <name type="primary">BCE2</name>
    <name type="synonym">DIN3</name>
    <name type="synonym">LTA1</name>
    <name type="ordered locus">At3g06850</name>
    <name type="ORF">F3E22.1</name>
</gene>
<protein>
    <recommendedName>
        <fullName>Lipoamide acyltransferase component of branched-chain alpha-keto acid dehydrogenase complex, mitochondrial</fullName>
        <ecNumber>2.3.1.168</ecNumber>
    </recommendedName>
    <alternativeName>
        <fullName>Branched-chain alpha-keto acid dehydrogenase complex component E2</fullName>
        <shortName>BCE2</shortName>
        <shortName>BCKAD-E2</shortName>
        <shortName>BCKADE2</shortName>
    </alternativeName>
    <alternativeName>
        <fullName>Dihydrolipoamide acetyltransferase component of branched-chain alpha-keto acid dehydrogenase complex</fullName>
    </alternativeName>
    <alternativeName>
        <fullName>Dihydrolipoamide branched chain transacylase</fullName>
    </alternativeName>
    <alternativeName>
        <fullName>Dihydrolipoyllysine-residue (2-methylpropanoyl)transferase</fullName>
    </alternativeName>
    <alternativeName>
        <fullName>Protein DARK INDUCIBLE 3</fullName>
    </alternativeName>
</protein>
<evidence type="ECO:0000250" key="1"/>
<evidence type="ECO:0000255" key="2"/>
<evidence type="ECO:0000255" key="3">
    <source>
        <dbReference type="PROSITE-ProRule" id="PRU01066"/>
    </source>
</evidence>
<evidence type="ECO:0000255" key="4">
    <source>
        <dbReference type="PROSITE-ProRule" id="PRU01170"/>
    </source>
</evidence>
<evidence type="ECO:0000269" key="5">
    <source>
    </source>
</evidence>
<evidence type="ECO:0000269" key="6">
    <source>
    </source>
</evidence>
<evidence type="ECO:0000269" key="7">
    <source>
    </source>
</evidence>
<evidence type="ECO:0000269" key="8">
    <source>
    </source>
</evidence>
<evidence type="ECO:0000269" key="9">
    <source>
    </source>
</evidence>
<evidence type="ECO:0000269" key="10">
    <source>
    </source>
</evidence>
<evidence type="ECO:0000269" key="11">
    <source>
    </source>
</evidence>
<evidence type="ECO:0000269" key="12">
    <source>
    </source>
</evidence>
<evidence type="ECO:0000305" key="13"/>